<feature type="chain" id="PRO_0000231286" description="UDP-N-acetylglucosamine 1-carboxyvinyltransferase 3">
    <location>
        <begin position="1"/>
        <end position="424"/>
    </location>
</feature>
<feature type="active site" description="Proton donor" evidence="1">
    <location>
        <position position="118"/>
    </location>
</feature>
<feature type="binding site" evidence="1">
    <location>
        <begin position="22"/>
        <end position="23"/>
    </location>
    <ligand>
        <name>phosphoenolpyruvate</name>
        <dbReference type="ChEBI" id="CHEBI:58702"/>
    </ligand>
</feature>
<feature type="binding site" evidence="1">
    <location>
        <position position="94"/>
    </location>
    <ligand>
        <name>UDP-N-acetyl-alpha-D-glucosamine</name>
        <dbReference type="ChEBI" id="CHEBI:57705"/>
    </ligand>
</feature>
<feature type="binding site" evidence="1">
    <location>
        <begin position="123"/>
        <end position="127"/>
    </location>
    <ligand>
        <name>UDP-N-acetyl-alpha-D-glucosamine</name>
        <dbReference type="ChEBI" id="CHEBI:57705"/>
    </ligand>
</feature>
<feature type="binding site" evidence="1">
    <location>
        <position position="306"/>
    </location>
    <ligand>
        <name>UDP-N-acetyl-alpha-D-glucosamine</name>
        <dbReference type="ChEBI" id="CHEBI:57705"/>
    </ligand>
</feature>
<feature type="binding site" evidence="1">
    <location>
        <position position="328"/>
    </location>
    <ligand>
        <name>UDP-N-acetyl-alpha-D-glucosamine</name>
        <dbReference type="ChEBI" id="CHEBI:57705"/>
    </ligand>
</feature>
<reference key="1">
    <citation type="journal article" date="2004" name="Nucleic Acids Res.">
        <title>Genome sequence of Symbiobacterium thermophilum, an uncultivable bacterium that depends on microbial commensalism.</title>
        <authorList>
            <person name="Ueda K."/>
            <person name="Yamashita A."/>
            <person name="Ishikawa J."/>
            <person name="Shimada M."/>
            <person name="Watsuji T."/>
            <person name="Morimura K."/>
            <person name="Ikeda H."/>
            <person name="Hattori M."/>
            <person name="Beppu T."/>
        </authorList>
    </citation>
    <scope>NUCLEOTIDE SEQUENCE [LARGE SCALE GENOMIC DNA]</scope>
    <source>
        <strain>DSM 24528 / JCM 14929 / IAM 14863 / T</strain>
    </source>
</reference>
<sequence>MTTLRIRGGRPLQGTIRVGGRKNATLPLIAATLLADGTSRLENVPQIHDVMVYRKLLTGLGARVDWDPVHGILTVHTGGVRPGEPDYHLASSIRASYYLLGVMLARYGEASVPMPGGDNIGHRPVDQHFKGLSALGAEIWMDRGIIRARARRLRGAHVYLDIISVGATIQVMLAASLAEGTTVIQNCAREPHVVAVANFINACGGKVTGAGTDTIRVRGVDRLVGATQTVIPDDIEAGTWMMAAAMTQGDVTLQNVIPTHITPIMAKLREAGVEVHELGDAVRVVGRERPKAINVKTLPYPGFPTDAQSQMTALLSLAEGTSYITETLYEDRFRFVPELVRMGAQIRVEGRTAIVKGVEQLYGAPVEATDIRAGAALVIAGLAAEGETTIYGMEHVQRGYEKLEQKLLALGADVQMERQGAAVV</sequence>
<keyword id="KW-0131">Cell cycle</keyword>
<keyword id="KW-0132">Cell division</keyword>
<keyword id="KW-0133">Cell shape</keyword>
<keyword id="KW-0961">Cell wall biogenesis/degradation</keyword>
<keyword id="KW-0963">Cytoplasm</keyword>
<keyword id="KW-0573">Peptidoglycan synthesis</keyword>
<keyword id="KW-1185">Reference proteome</keyword>
<keyword id="KW-0808">Transferase</keyword>
<proteinExistence type="inferred from homology"/>
<protein>
    <recommendedName>
        <fullName evidence="1">UDP-N-acetylglucosamine 1-carboxyvinyltransferase 3</fullName>
        <ecNumber evidence="1">2.5.1.7</ecNumber>
    </recommendedName>
    <alternativeName>
        <fullName evidence="1">Enoylpyruvate transferase 3</fullName>
    </alternativeName>
    <alternativeName>
        <fullName evidence="1">UDP-N-acetylglucosamine enolpyruvyl transferase 3</fullName>
        <shortName evidence="1">EPT 3</shortName>
    </alternativeName>
</protein>
<evidence type="ECO:0000255" key="1">
    <source>
        <dbReference type="HAMAP-Rule" id="MF_00111"/>
    </source>
</evidence>
<accession>Q67J65</accession>
<comment type="function">
    <text evidence="1">Cell wall formation. Adds enolpyruvyl to UDP-N-acetylglucosamine.</text>
</comment>
<comment type="catalytic activity">
    <reaction evidence="1">
        <text>phosphoenolpyruvate + UDP-N-acetyl-alpha-D-glucosamine = UDP-N-acetyl-3-O-(1-carboxyvinyl)-alpha-D-glucosamine + phosphate</text>
        <dbReference type="Rhea" id="RHEA:18681"/>
        <dbReference type="ChEBI" id="CHEBI:43474"/>
        <dbReference type="ChEBI" id="CHEBI:57705"/>
        <dbReference type="ChEBI" id="CHEBI:58702"/>
        <dbReference type="ChEBI" id="CHEBI:68483"/>
        <dbReference type="EC" id="2.5.1.7"/>
    </reaction>
</comment>
<comment type="pathway">
    <text evidence="1">Cell wall biogenesis; peptidoglycan biosynthesis.</text>
</comment>
<comment type="subcellular location">
    <subcellularLocation>
        <location evidence="1">Cytoplasm</location>
    </subcellularLocation>
</comment>
<comment type="similarity">
    <text evidence="1">Belongs to the EPSP synthase family. MurA subfamily.</text>
</comment>
<gene>
    <name evidence="1" type="primary">murA3</name>
    <name type="ordered locus">STH3304</name>
</gene>
<dbReference type="EC" id="2.5.1.7" evidence="1"/>
<dbReference type="EMBL" id="AP006840">
    <property type="protein sequence ID" value="BAD42285.1"/>
    <property type="molecule type" value="Genomic_DNA"/>
</dbReference>
<dbReference type="RefSeq" id="WP_011197416.1">
    <property type="nucleotide sequence ID" value="NC_006177.1"/>
</dbReference>
<dbReference type="SMR" id="Q67J65"/>
<dbReference type="STRING" id="292459.STH3304"/>
<dbReference type="KEGG" id="sth:STH3304"/>
<dbReference type="eggNOG" id="COG0766">
    <property type="taxonomic scope" value="Bacteria"/>
</dbReference>
<dbReference type="HOGENOM" id="CLU_027387_0_0_9"/>
<dbReference type="OrthoDB" id="9803760at2"/>
<dbReference type="UniPathway" id="UPA00219"/>
<dbReference type="Proteomes" id="UP000000417">
    <property type="component" value="Chromosome"/>
</dbReference>
<dbReference type="GO" id="GO:0005737">
    <property type="term" value="C:cytoplasm"/>
    <property type="evidence" value="ECO:0007669"/>
    <property type="project" value="UniProtKB-SubCell"/>
</dbReference>
<dbReference type="GO" id="GO:0008760">
    <property type="term" value="F:UDP-N-acetylglucosamine 1-carboxyvinyltransferase activity"/>
    <property type="evidence" value="ECO:0007669"/>
    <property type="project" value="UniProtKB-UniRule"/>
</dbReference>
<dbReference type="GO" id="GO:0051301">
    <property type="term" value="P:cell division"/>
    <property type="evidence" value="ECO:0007669"/>
    <property type="project" value="UniProtKB-KW"/>
</dbReference>
<dbReference type="GO" id="GO:0071555">
    <property type="term" value="P:cell wall organization"/>
    <property type="evidence" value="ECO:0007669"/>
    <property type="project" value="UniProtKB-KW"/>
</dbReference>
<dbReference type="GO" id="GO:0009252">
    <property type="term" value="P:peptidoglycan biosynthetic process"/>
    <property type="evidence" value="ECO:0007669"/>
    <property type="project" value="UniProtKB-UniRule"/>
</dbReference>
<dbReference type="GO" id="GO:0008360">
    <property type="term" value="P:regulation of cell shape"/>
    <property type="evidence" value="ECO:0007669"/>
    <property type="project" value="UniProtKB-KW"/>
</dbReference>
<dbReference type="GO" id="GO:0019277">
    <property type="term" value="P:UDP-N-acetylgalactosamine biosynthetic process"/>
    <property type="evidence" value="ECO:0007669"/>
    <property type="project" value="InterPro"/>
</dbReference>
<dbReference type="CDD" id="cd01555">
    <property type="entry name" value="UdpNAET"/>
    <property type="match status" value="1"/>
</dbReference>
<dbReference type="Gene3D" id="3.65.10.10">
    <property type="entry name" value="Enolpyruvate transferase domain"/>
    <property type="match status" value="2"/>
</dbReference>
<dbReference type="HAMAP" id="MF_00111">
    <property type="entry name" value="MurA"/>
    <property type="match status" value="1"/>
</dbReference>
<dbReference type="InterPro" id="IPR001986">
    <property type="entry name" value="Enolpyruvate_Tfrase_dom"/>
</dbReference>
<dbReference type="InterPro" id="IPR036968">
    <property type="entry name" value="Enolpyruvate_Tfrase_sf"/>
</dbReference>
<dbReference type="InterPro" id="IPR050068">
    <property type="entry name" value="MurA_subfamily"/>
</dbReference>
<dbReference type="InterPro" id="IPR013792">
    <property type="entry name" value="RNA3'P_cycl/enolpyr_Trfase_a/b"/>
</dbReference>
<dbReference type="InterPro" id="IPR005750">
    <property type="entry name" value="UDP_GlcNAc_COvinyl_MurA"/>
</dbReference>
<dbReference type="NCBIfam" id="TIGR01072">
    <property type="entry name" value="murA"/>
    <property type="match status" value="1"/>
</dbReference>
<dbReference type="NCBIfam" id="NF006873">
    <property type="entry name" value="PRK09369.1"/>
    <property type="match status" value="1"/>
</dbReference>
<dbReference type="PANTHER" id="PTHR43783">
    <property type="entry name" value="UDP-N-ACETYLGLUCOSAMINE 1-CARBOXYVINYLTRANSFERASE"/>
    <property type="match status" value="1"/>
</dbReference>
<dbReference type="PANTHER" id="PTHR43783:SF1">
    <property type="entry name" value="UDP-N-ACETYLGLUCOSAMINE 1-CARBOXYVINYLTRANSFERASE"/>
    <property type="match status" value="1"/>
</dbReference>
<dbReference type="Pfam" id="PF00275">
    <property type="entry name" value="EPSP_synthase"/>
    <property type="match status" value="1"/>
</dbReference>
<dbReference type="SUPFAM" id="SSF55205">
    <property type="entry name" value="EPT/RTPC-like"/>
    <property type="match status" value="1"/>
</dbReference>
<organism>
    <name type="scientific">Symbiobacterium thermophilum (strain DSM 24528 / JCM 14929 / IAM 14863 / T)</name>
    <dbReference type="NCBI Taxonomy" id="292459"/>
    <lineage>
        <taxon>Bacteria</taxon>
        <taxon>Bacillati</taxon>
        <taxon>Bacillota</taxon>
        <taxon>Clostridia</taxon>
        <taxon>Eubacteriales</taxon>
        <taxon>Symbiobacteriaceae</taxon>
        <taxon>Symbiobacterium</taxon>
    </lineage>
</organism>
<name>MURA3_SYMTH</name>